<keyword id="KW-0963">Cytoplasm</keyword>
<keyword id="KW-0539">Nucleus</keyword>
<keyword id="KW-0597">Phosphoprotein</keyword>
<keyword id="KW-1185">Reference proteome</keyword>
<dbReference type="EMBL" id="DS027688">
    <property type="protein sequence ID" value="EAW22838.1"/>
    <property type="molecule type" value="Genomic_DNA"/>
</dbReference>
<dbReference type="RefSeq" id="XP_001264735.1">
    <property type="nucleotide sequence ID" value="XM_001264734.1"/>
</dbReference>
<dbReference type="STRING" id="331117.A1D345"/>
<dbReference type="EnsemblFungi" id="EAW22838">
    <property type="protein sequence ID" value="EAW22838"/>
    <property type="gene ID" value="NFIA_015310"/>
</dbReference>
<dbReference type="GeneID" id="4590991"/>
<dbReference type="KEGG" id="nfi:NFIA_015310"/>
<dbReference type="VEuPathDB" id="FungiDB:NFIA_015310"/>
<dbReference type="eggNOG" id="KOG3783">
    <property type="taxonomic scope" value="Eukaryota"/>
</dbReference>
<dbReference type="HOGENOM" id="CLU_014926_1_0_1"/>
<dbReference type="OMA" id="AFHSDIY"/>
<dbReference type="OrthoDB" id="2154985at2759"/>
<dbReference type="Proteomes" id="UP000006702">
    <property type="component" value="Unassembled WGS sequence"/>
</dbReference>
<dbReference type="GO" id="GO:0005829">
    <property type="term" value="C:cytosol"/>
    <property type="evidence" value="ECO:0007669"/>
    <property type="project" value="TreeGrafter"/>
</dbReference>
<dbReference type="GO" id="GO:0005741">
    <property type="term" value="C:mitochondrial outer membrane"/>
    <property type="evidence" value="ECO:0007669"/>
    <property type="project" value="TreeGrafter"/>
</dbReference>
<dbReference type="GO" id="GO:0005634">
    <property type="term" value="C:nucleus"/>
    <property type="evidence" value="ECO:0007669"/>
    <property type="project" value="UniProtKB-SubCell"/>
</dbReference>
<dbReference type="InterPro" id="IPR019412">
    <property type="entry name" value="Iml2/TPR_39"/>
</dbReference>
<dbReference type="PANTHER" id="PTHR31859">
    <property type="entry name" value="TETRATRICOPEPTIDE REPEAT PROTEIN 39 FAMILY MEMBER"/>
    <property type="match status" value="1"/>
</dbReference>
<dbReference type="PANTHER" id="PTHR31859:SF1">
    <property type="entry name" value="TETRATRICOPEPTIDE REPEAT PROTEIN 39C"/>
    <property type="match status" value="1"/>
</dbReference>
<dbReference type="Pfam" id="PF10300">
    <property type="entry name" value="Iml2-TPR_39"/>
    <property type="match status" value="1"/>
</dbReference>
<reference key="1">
    <citation type="journal article" date="2008" name="PLoS Genet.">
        <title>Genomic islands in the pathogenic filamentous fungus Aspergillus fumigatus.</title>
        <authorList>
            <person name="Fedorova N.D."/>
            <person name="Khaldi N."/>
            <person name="Joardar V.S."/>
            <person name="Maiti R."/>
            <person name="Amedeo P."/>
            <person name="Anderson M.J."/>
            <person name="Crabtree J."/>
            <person name="Silva J.C."/>
            <person name="Badger J.H."/>
            <person name="Albarraq A."/>
            <person name="Angiuoli S."/>
            <person name="Bussey H."/>
            <person name="Bowyer P."/>
            <person name="Cotty P.J."/>
            <person name="Dyer P.S."/>
            <person name="Egan A."/>
            <person name="Galens K."/>
            <person name="Fraser-Liggett C.M."/>
            <person name="Haas B.J."/>
            <person name="Inman J.M."/>
            <person name="Kent R."/>
            <person name="Lemieux S."/>
            <person name="Malavazi I."/>
            <person name="Orvis J."/>
            <person name="Roemer T."/>
            <person name="Ronning C.M."/>
            <person name="Sundaram J.P."/>
            <person name="Sutton G."/>
            <person name="Turner G."/>
            <person name="Venter J.C."/>
            <person name="White O.R."/>
            <person name="Whitty B.R."/>
            <person name="Youngman P."/>
            <person name="Wolfe K.H."/>
            <person name="Goldman G.H."/>
            <person name="Wortman J.R."/>
            <person name="Jiang B."/>
            <person name="Denning D.W."/>
            <person name="Nierman W.C."/>
        </authorList>
    </citation>
    <scope>NUCLEOTIDE SEQUENCE [LARGE SCALE GENOMIC DNA]</scope>
    <source>
        <strain>ATCC 1020 / DSM 3700 / CBS 544.65 / FGSC A1164 / JCM 1740 / NRRL 181 / WB 181</strain>
    </source>
</reference>
<organism>
    <name type="scientific">Neosartorya fischeri (strain ATCC 1020 / DSM 3700 / CBS 544.65 / FGSC A1164 / JCM 1740 / NRRL 181 / WB 181)</name>
    <name type="common">Aspergillus fischerianus</name>
    <dbReference type="NCBI Taxonomy" id="331117"/>
    <lineage>
        <taxon>Eukaryota</taxon>
        <taxon>Fungi</taxon>
        <taxon>Dikarya</taxon>
        <taxon>Ascomycota</taxon>
        <taxon>Pezizomycotina</taxon>
        <taxon>Eurotiomycetes</taxon>
        <taxon>Eurotiomycetidae</taxon>
        <taxon>Eurotiales</taxon>
        <taxon>Aspergillaceae</taxon>
        <taxon>Aspergillus</taxon>
        <taxon>Aspergillus subgen. Fumigati</taxon>
    </lineage>
</organism>
<evidence type="ECO:0000250" key="1">
    <source>
        <dbReference type="UniProtKB" id="P47031"/>
    </source>
</evidence>
<evidence type="ECO:0000256" key="2">
    <source>
        <dbReference type="SAM" id="MobiDB-lite"/>
    </source>
</evidence>
<evidence type="ECO:0000305" key="3"/>
<protein>
    <recommendedName>
        <fullName>Inclusion body clearance protein iml2</fullName>
    </recommendedName>
</protein>
<comment type="function">
    <text evidence="1">Inclusion body (IB) resident protein that interacts strongly with lipid droplet (LD) proteins. Involved in LD-mediated IB clearing after protein folding stress, probably by enabling access to the IBs of an LD-stored soluble sterol derivative that acts as a chaperone in inclusion clearing.</text>
</comment>
<comment type="subunit">
    <text evidence="1">Interacts with lipid droplet proteins.</text>
</comment>
<comment type="subcellular location">
    <subcellularLocation>
        <location evidence="1">Cytoplasm</location>
    </subcellularLocation>
    <subcellularLocation>
        <location evidence="1">Nucleus</location>
    </subcellularLocation>
    <text evidence="1">Localized exclusively in cytoplasmic inclusion bodies under protein folding stress conditions.</text>
</comment>
<comment type="similarity">
    <text evidence="3">Belongs to the IML2 family.</text>
</comment>
<accession>A1D345</accession>
<feature type="chain" id="PRO_0000333352" description="Inclusion body clearance protein iml2">
    <location>
        <begin position="1"/>
        <end position="719"/>
    </location>
</feature>
<feature type="region of interest" description="Disordered" evidence="2">
    <location>
        <begin position="177"/>
        <end position="202"/>
    </location>
</feature>
<feature type="compositionally biased region" description="Low complexity" evidence="2">
    <location>
        <begin position="186"/>
        <end position="202"/>
    </location>
</feature>
<sequence>MFRVGSWLYGKKPAANASTQSLDSLVELRDPATLILNDDVDGAEAGLAEGTSTFHNLGRGVVAFIRATLGFEQDIMRQASERLNEAETSASVDQHRAQHNSHAPNTYHSPMYSPGTEFALCQAIAQLMSAIVGVLNESLTESIKAFYRLRKAYITLDAILKMEQKYMEESRSATLVESTTSGSVPSSQRHSSSNLQSSSSSISSAKVKEATADTLAAPSKDTDVNERLADLSLSGEAPVAEDPGQTPTPINTDILDHDPDSDIFQNQIDVFVHSGSNFCFGVLLLLISMVPPSFSKLLSIIGFHGDKERGLKMLWQASKFHNLIGGIAAFAILGYYNGFVRYCDIMPDSIPGKDGDVQGYPQKRLELLLAKMRERFPKSQLWLLEESRMSGANKNLDRALELLCGEERSPLKQVEALRVFERSLNAMYLHKYELCADSFLECVDLNSWSRSLYYYIAGSCHLSLYRDVKETDSAKAAKHAELAEKYFRMAPTVAGKKRFMARQLPFDVFVARKFAKWEARAKEWKVSLVDAVGIDPIEEMIFFWNGHSRMTDEQLQESLQKLAWSESNANTTWSREGPEEKAILKLLRAAVHRSLRKHTQAKEMLEDILGQDRTLFKGHLKDDWICPVAHFEMAANLWMERPTYIANHSGAKQDSDKESAGPADAKDALQYERERVRKCKEYLEKAAKWESYELDARIGLKVTAAMEAVQKWESTHPTV</sequence>
<name>IML2_NEOFI</name>
<proteinExistence type="inferred from homology"/>
<gene>
    <name type="primary">iml2</name>
    <name type="ORF">NFIA_015310</name>
</gene>